<keyword id="KW-0204">Cytolysis</keyword>
<keyword id="KW-0578">Host cell lysis by virus</keyword>
<keyword id="KW-1185">Reference proteome</keyword>
<keyword id="KW-1188">Viral release from host cell</keyword>
<name>ESSD_ECOLI</name>
<reference key="1">
    <citation type="submission" date="1997-01" db="EMBL/GenBank/DDBJ databases">
        <title>Sequence of minutes 4-25 of Escherichia coli.</title>
        <authorList>
            <person name="Chung E."/>
            <person name="Allen E."/>
            <person name="Araujo R."/>
            <person name="Aparicio A.M."/>
            <person name="Davis K."/>
            <person name="Duncan M."/>
            <person name="Federspiel N."/>
            <person name="Hyman R."/>
            <person name="Kalman S."/>
            <person name="Komp C."/>
            <person name="Kurdi O."/>
            <person name="Lew H."/>
            <person name="Lin D."/>
            <person name="Namath A."/>
            <person name="Oefner P."/>
            <person name="Roberts D."/>
            <person name="Schramm S."/>
            <person name="Davis R.W."/>
        </authorList>
    </citation>
    <scope>NUCLEOTIDE SEQUENCE [LARGE SCALE GENOMIC DNA]</scope>
    <source>
        <strain>K12 / MG1655 / ATCC 47076</strain>
    </source>
</reference>
<reference key="2">
    <citation type="journal article" date="1997" name="Science">
        <title>The complete genome sequence of Escherichia coli K-12.</title>
        <authorList>
            <person name="Blattner F.R."/>
            <person name="Plunkett G. III"/>
            <person name="Bloch C.A."/>
            <person name="Perna N.T."/>
            <person name="Burland V."/>
            <person name="Riley M."/>
            <person name="Collado-Vides J."/>
            <person name="Glasner J.D."/>
            <person name="Rode C.K."/>
            <person name="Mayhew G.F."/>
            <person name="Gregor J."/>
            <person name="Davis N.W."/>
            <person name="Kirkpatrick H.A."/>
            <person name="Goeden M.A."/>
            <person name="Rose D.J."/>
            <person name="Mau B."/>
            <person name="Shao Y."/>
        </authorList>
    </citation>
    <scope>NUCLEOTIDE SEQUENCE [LARGE SCALE GENOMIC DNA]</scope>
    <source>
        <strain>K12 / MG1655 / ATCC 47076</strain>
    </source>
</reference>
<reference key="3">
    <citation type="journal article" date="2006" name="Mol. Syst. Biol.">
        <title>Highly accurate genome sequences of Escherichia coli K-12 strains MG1655 and W3110.</title>
        <authorList>
            <person name="Hayashi K."/>
            <person name="Morooka N."/>
            <person name="Yamamoto Y."/>
            <person name="Fujita K."/>
            <person name="Isono K."/>
            <person name="Choi S."/>
            <person name="Ohtsubo E."/>
            <person name="Baba T."/>
            <person name="Wanner B.L."/>
            <person name="Mori H."/>
            <person name="Horiuchi T."/>
        </authorList>
    </citation>
    <scope>NUCLEOTIDE SEQUENCE [LARGE SCALE GENOMIC DNA]</scope>
    <source>
        <strain>K12 / W3110 / ATCC 27325 / DSM 5911</strain>
    </source>
</reference>
<dbReference type="EMBL" id="U82598">
    <property type="protein sequence ID" value="AAB40750.1"/>
    <property type="molecule type" value="Genomic_DNA"/>
</dbReference>
<dbReference type="EMBL" id="U00096">
    <property type="protein sequence ID" value="AAC73655.1"/>
    <property type="molecule type" value="Genomic_DNA"/>
</dbReference>
<dbReference type="EMBL" id="AP009048">
    <property type="protein sequence ID" value="BAE76329.1"/>
    <property type="molecule type" value="Genomic_DNA"/>
</dbReference>
<dbReference type="PIR" id="H64787">
    <property type="entry name" value="H64787"/>
</dbReference>
<dbReference type="RefSeq" id="NP_415086.1">
    <property type="nucleotide sequence ID" value="NC_000913.3"/>
</dbReference>
<dbReference type="RefSeq" id="WP_000839596.1">
    <property type="nucleotide sequence ID" value="NZ_JACEFS010000069.1"/>
</dbReference>
<dbReference type="SMR" id="P0A9R2"/>
<dbReference type="BioGRID" id="4259884">
    <property type="interactions" value="11"/>
</dbReference>
<dbReference type="FunCoup" id="P0A9R2">
    <property type="interactions" value="54"/>
</dbReference>
<dbReference type="STRING" id="511145.b0554"/>
<dbReference type="PaxDb" id="511145-b0554"/>
<dbReference type="EnsemblBacteria" id="AAC73655">
    <property type="protein sequence ID" value="AAC73655"/>
    <property type="gene ID" value="b0554"/>
</dbReference>
<dbReference type="GeneID" id="947545"/>
<dbReference type="KEGG" id="ecj:JW0543"/>
<dbReference type="KEGG" id="eco:b0554"/>
<dbReference type="KEGG" id="ecoc:C3026_02740"/>
<dbReference type="PATRIC" id="fig|1411691.4.peg.1721"/>
<dbReference type="EchoBASE" id="EB3398"/>
<dbReference type="eggNOG" id="ENOG5032YQ9">
    <property type="taxonomic scope" value="Bacteria"/>
</dbReference>
<dbReference type="HOGENOM" id="CLU_180637_0_0_6"/>
<dbReference type="InParanoid" id="P0A9R2"/>
<dbReference type="OMA" id="VMKSMDK"/>
<dbReference type="OrthoDB" id="6470800at2"/>
<dbReference type="BioCyc" id="EcoCyc:G6309-MONOMER"/>
<dbReference type="PRO" id="PR:P0A9R2"/>
<dbReference type="Proteomes" id="UP000000625">
    <property type="component" value="Chromosome"/>
</dbReference>
<dbReference type="GO" id="GO:0140911">
    <property type="term" value="F:pore-forming activity"/>
    <property type="evidence" value="ECO:0007669"/>
    <property type="project" value="InterPro"/>
</dbReference>
<dbReference type="GO" id="GO:0044659">
    <property type="term" value="P:viral release from host cell by cytolysis"/>
    <property type="evidence" value="ECO:0000250"/>
    <property type="project" value="EcoCyc"/>
</dbReference>
<dbReference type="InterPro" id="IPR007054">
    <property type="entry name" value="Lysis_S"/>
</dbReference>
<dbReference type="Pfam" id="PF04971">
    <property type="entry name" value="Phage_holin_2_1"/>
    <property type="match status" value="1"/>
</dbReference>
<dbReference type="PIRSF" id="PIRSF030786">
    <property type="entry name" value="Lysis_S"/>
    <property type="match status" value="1"/>
</dbReference>
<comment type="miscellaneous">
    <text>Encoded by the cryptic lambdoid prophage DLP12.</text>
</comment>
<comment type="similarity">
    <text evidence="1">Belongs to the lambda phage S protein family.</text>
</comment>
<evidence type="ECO:0000305" key="1"/>
<feature type="chain" id="PRO_0000077655" description="Prophage lysis protein S homolog EssD">
    <location>
        <begin position="1"/>
        <end position="71"/>
    </location>
</feature>
<accession>P0A9R2</accession>
<accession>P77242</accession>
<accession>Q2MBM7</accession>
<proteinExistence type="inferred from homology"/>
<sequence>MKSMDKLTTGVAYGTSAGSAGYWFLQLLDKVTPSQWAAIGVLGSLVFGLLTYLTNLYFKIKEDKRKAARGE</sequence>
<protein>
    <recommendedName>
        <fullName evidence="1">Prophage lysis protein S homolog EssD</fullName>
    </recommendedName>
    <alternativeName>
        <fullName>Lysis protein S homolog from lambdoid prophage DLP12</fullName>
    </alternativeName>
</protein>
<organism>
    <name type="scientific">Escherichia coli (strain K12)</name>
    <dbReference type="NCBI Taxonomy" id="83333"/>
    <lineage>
        <taxon>Bacteria</taxon>
        <taxon>Pseudomonadati</taxon>
        <taxon>Pseudomonadota</taxon>
        <taxon>Gammaproteobacteria</taxon>
        <taxon>Enterobacterales</taxon>
        <taxon>Enterobacteriaceae</taxon>
        <taxon>Escherichia</taxon>
    </lineage>
</organism>
<gene>
    <name type="primary">essD</name>
    <name type="synonym">ybcR</name>
    <name type="ordered locus">b0554</name>
    <name type="ordered locus">JW0543</name>
</gene>